<feature type="chain" id="PRO_0000120087" description="Thioredoxin">
    <location>
        <begin position="1"/>
        <end position="108"/>
    </location>
</feature>
<feature type="domain" description="Thioredoxin" evidence="1">
    <location>
        <begin position="2"/>
        <end position="108"/>
    </location>
</feature>
<feature type="disulfide bond" description="Redox-active" evidence="1">
    <location>
        <begin position="32"/>
        <end position="35"/>
    </location>
</feature>
<feature type="unsure residue" description="L or I">
    <location>
        <position position="24"/>
    </location>
</feature>
<feature type="unsure residue" description="L or I">
    <location>
        <position position="38"/>
    </location>
</feature>
<feature type="unsure residue" description="L or I">
    <location>
        <position position="58"/>
    </location>
</feature>
<feature type="unsure residue" description="I or L">
    <location>
        <position position="72"/>
    </location>
</feature>
<feature type="unsure residue" description="I or L">
    <location>
        <position position="81"/>
    </location>
</feature>
<dbReference type="SMR" id="P10472"/>
<dbReference type="GO" id="GO:0005829">
    <property type="term" value="C:cytosol"/>
    <property type="evidence" value="ECO:0007669"/>
    <property type="project" value="TreeGrafter"/>
</dbReference>
<dbReference type="GO" id="GO:0015035">
    <property type="term" value="F:protein-disulfide reductase activity"/>
    <property type="evidence" value="ECO:0007669"/>
    <property type="project" value="InterPro"/>
</dbReference>
<dbReference type="GO" id="GO:0045454">
    <property type="term" value="P:cell redox homeostasis"/>
    <property type="evidence" value="ECO:0007669"/>
    <property type="project" value="TreeGrafter"/>
</dbReference>
<dbReference type="CDD" id="cd02947">
    <property type="entry name" value="TRX_family"/>
    <property type="match status" value="1"/>
</dbReference>
<dbReference type="FunFam" id="3.40.30.10:FF:000001">
    <property type="entry name" value="Thioredoxin"/>
    <property type="match status" value="1"/>
</dbReference>
<dbReference type="Gene3D" id="3.40.30.10">
    <property type="entry name" value="Glutaredoxin"/>
    <property type="match status" value="1"/>
</dbReference>
<dbReference type="InterPro" id="IPR005746">
    <property type="entry name" value="Thioredoxin"/>
</dbReference>
<dbReference type="InterPro" id="IPR036249">
    <property type="entry name" value="Thioredoxin-like_sf"/>
</dbReference>
<dbReference type="InterPro" id="IPR017937">
    <property type="entry name" value="Thioredoxin_CS"/>
</dbReference>
<dbReference type="InterPro" id="IPR013766">
    <property type="entry name" value="Thioredoxin_domain"/>
</dbReference>
<dbReference type="NCBIfam" id="TIGR01068">
    <property type="entry name" value="thioredoxin"/>
    <property type="match status" value="1"/>
</dbReference>
<dbReference type="PANTHER" id="PTHR45663">
    <property type="entry name" value="GEO12009P1"/>
    <property type="match status" value="1"/>
</dbReference>
<dbReference type="PANTHER" id="PTHR45663:SF11">
    <property type="entry name" value="GEO12009P1"/>
    <property type="match status" value="1"/>
</dbReference>
<dbReference type="Pfam" id="PF00085">
    <property type="entry name" value="Thioredoxin"/>
    <property type="match status" value="1"/>
</dbReference>
<dbReference type="PIRSF" id="PIRSF000077">
    <property type="entry name" value="Thioredoxin"/>
    <property type="match status" value="1"/>
</dbReference>
<dbReference type="PRINTS" id="PR00421">
    <property type="entry name" value="THIOREDOXIN"/>
</dbReference>
<dbReference type="SUPFAM" id="SSF52833">
    <property type="entry name" value="Thioredoxin-like"/>
    <property type="match status" value="1"/>
</dbReference>
<dbReference type="PROSITE" id="PS00194">
    <property type="entry name" value="THIOREDOXIN_1"/>
    <property type="match status" value="1"/>
</dbReference>
<dbReference type="PROSITE" id="PS51352">
    <property type="entry name" value="THIOREDOXIN_2"/>
    <property type="match status" value="1"/>
</dbReference>
<evidence type="ECO:0000255" key="1">
    <source>
        <dbReference type="PROSITE-ProRule" id="PRU00691"/>
    </source>
</evidence>
<evidence type="ECO:0000305" key="2"/>
<keyword id="KW-0903">Direct protein sequencing</keyword>
<keyword id="KW-1015">Disulfide bond</keyword>
<keyword id="KW-0249">Electron transport</keyword>
<keyword id="KW-0676">Redox-active center</keyword>
<keyword id="KW-0813">Transport</keyword>
<reference key="1">
    <citation type="journal article" date="1987" name="J. Biol. Chem.">
        <title>Mass spectrometrically derived amino acid sequence of thioredoxin from Chlorobium, an evolutionarily prominent photosynthetic bacterium.</title>
        <authorList>
            <person name="Mathews W.R."/>
            <person name="Johnson R.S."/>
            <person name="Cornwell K.L."/>
            <person name="Johnson T.C."/>
            <person name="Buchanan B.B."/>
            <person name="Biemann K."/>
        </authorList>
    </citation>
    <scope>PROTEIN SEQUENCE</scope>
    <scope>IDENTIFICATION BY MASS SPECTROMETRY</scope>
</reference>
<reference key="2">
    <citation type="journal article" date="1994" name="Acc. Chem. Res.">
        <title>Amino acid sequencing of proteins.</title>
        <authorList>
            <person name="Biemann K."/>
            <person name="Papayannopoulos I.A."/>
        </authorList>
    </citation>
    <scope>PROTEIN SEQUENCE</scope>
    <scope>IDENTIFICATION BY MASS SPECTROMETRY</scope>
</reference>
<name>THIO_CHLTI</name>
<sequence length="108" mass="11828">AGKYFEATDKNFQTEILDSDKAVLVDFWASWCGPCMMLGPVIEQLADDYEGKAIIAKLNVDENPNIAGQYGIRSIPTMLIIKGGKVVDQMVGALPKNMIAKKIDEHIG</sequence>
<protein>
    <recommendedName>
        <fullName>Thioredoxin</fullName>
        <shortName>Trx</shortName>
    </recommendedName>
</protein>
<comment type="function">
    <text>Participates in various redox reactions through the reversible oxidation of its active center dithiol to a disulfide and catalyzes dithiol-disulfide exchange reactions.</text>
</comment>
<comment type="similarity">
    <text evidence="2">Belongs to the thioredoxin family.</text>
</comment>
<organism>
    <name type="scientific">Chlorobaculum thiosulfatiphilum</name>
    <name type="common">Chlorobium limicola f.sp. thiosulfatophilum</name>
    <dbReference type="NCBI Taxonomy" id="115852"/>
    <lineage>
        <taxon>Bacteria</taxon>
        <taxon>Pseudomonadati</taxon>
        <taxon>Chlorobiota</taxon>
        <taxon>Chlorobiia</taxon>
        <taxon>Chlorobiales</taxon>
        <taxon>Chlorobiaceae</taxon>
        <taxon>Chlorobaculum</taxon>
    </lineage>
</organism>
<gene>
    <name type="primary">trxA</name>
</gene>
<accession>P10472</accession>
<proteinExistence type="evidence at protein level"/>